<feature type="initiator methionine" description="Removed" evidence="1">
    <location>
        <position position="1"/>
    </location>
</feature>
<feature type="chain" id="PRO_0000425032" description="Profilin-1">
    <location>
        <begin position="2"/>
        <end position="134"/>
    </location>
</feature>
<feature type="short sequence motif" description="Involved in PIP2 interaction">
    <location>
        <begin position="84"/>
        <end position="100"/>
    </location>
</feature>
<feature type="modified residue" description="Phosphothreonine" evidence="1">
    <location>
        <position position="114"/>
    </location>
</feature>
<feature type="disulfide bond" evidence="3">
    <location>
        <begin position="13"/>
        <end position="118"/>
    </location>
</feature>
<accession>A4GE38</accession>
<protein>
    <recommendedName>
        <fullName>Profilin-1</fullName>
    </recommendedName>
    <alternativeName>
        <fullName>Pollen allergen Ole e 2</fullName>
    </alternativeName>
    <allergenName>Ole e 2</allergenName>
</protein>
<dbReference type="EMBL" id="DQ317563">
    <property type="protein sequence ID" value="ABC47406.1"/>
    <property type="molecule type" value="mRNA"/>
</dbReference>
<dbReference type="SMR" id="A4GE38"/>
<dbReference type="Allergome" id="490">
    <property type="allergen name" value="Ole e 2"/>
</dbReference>
<dbReference type="GO" id="GO:0005938">
    <property type="term" value="C:cell cortex"/>
    <property type="evidence" value="ECO:0007669"/>
    <property type="project" value="TreeGrafter"/>
</dbReference>
<dbReference type="GO" id="GO:0005856">
    <property type="term" value="C:cytoskeleton"/>
    <property type="evidence" value="ECO:0007669"/>
    <property type="project" value="UniProtKB-SubCell"/>
</dbReference>
<dbReference type="GO" id="GO:0003785">
    <property type="term" value="F:actin monomer binding"/>
    <property type="evidence" value="ECO:0007669"/>
    <property type="project" value="TreeGrafter"/>
</dbReference>
<dbReference type="CDD" id="cd00148">
    <property type="entry name" value="PROF"/>
    <property type="match status" value="1"/>
</dbReference>
<dbReference type="FunFam" id="3.30.450.30:FF:000001">
    <property type="entry name" value="Profilin"/>
    <property type="match status" value="1"/>
</dbReference>
<dbReference type="Gene3D" id="3.30.450.30">
    <property type="entry name" value="Dynein light chain 2a, cytoplasmic"/>
    <property type="match status" value="1"/>
</dbReference>
<dbReference type="InterPro" id="IPR048278">
    <property type="entry name" value="PFN"/>
</dbReference>
<dbReference type="InterPro" id="IPR005455">
    <property type="entry name" value="PFN_euk"/>
</dbReference>
<dbReference type="InterPro" id="IPR036140">
    <property type="entry name" value="PFN_sf"/>
</dbReference>
<dbReference type="InterPro" id="IPR027310">
    <property type="entry name" value="Profilin_CS"/>
</dbReference>
<dbReference type="PANTHER" id="PTHR11604">
    <property type="entry name" value="PROFILIN"/>
    <property type="match status" value="1"/>
</dbReference>
<dbReference type="PANTHER" id="PTHR11604:SF25">
    <property type="entry name" value="PROFILIN-5"/>
    <property type="match status" value="1"/>
</dbReference>
<dbReference type="Pfam" id="PF00235">
    <property type="entry name" value="Profilin"/>
    <property type="match status" value="1"/>
</dbReference>
<dbReference type="PRINTS" id="PR00392">
    <property type="entry name" value="PROFILIN"/>
</dbReference>
<dbReference type="PRINTS" id="PR01640">
    <property type="entry name" value="PROFILINPLNT"/>
</dbReference>
<dbReference type="SMART" id="SM00392">
    <property type="entry name" value="PROF"/>
    <property type="match status" value="1"/>
</dbReference>
<dbReference type="SUPFAM" id="SSF55770">
    <property type="entry name" value="Profilin (actin-binding protein)"/>
    <property type="match status" value="1"/>
</dbReference>
<dbReference type="PROSITE" id="PS00414">
    <property type="entry name" value="PROFILIN"/>
    <property type="match status" value="1"/>
</dbReference>
<comment type="function">
    <text evidence="1">Binds to actin and affects the structure of the cytoskeleton. At high concentrations, profilin prevents the polymerization of actin, whereas it enhances it at low concentrations (By similarity).</text>
</comment>
<comment type="subunit">
    <text evidence="1">Occurs in many kinds of cells as a complex with monomeric actin in a 1:1 ratio.</text>
</comment>
<comment type="subcellular location">
    <subcellularLocation>
        <location evidence="1">Cytoplasm</location>
        <location evidence="1">Cytoskeleton</location>
    </subcellularLocation>
</comment>
<comment type="PTM">
    <text evidence="1">Phosphorylated by MAP kinases.</text>
</comment>
<comment type="polymorphism">
    <text>Several isoforms of the allergen exist due to polymorphism.</text>
</comment>
<comment type="allergen">
    <text>Causes an allergic reaction in human.</text>
</comment>
<comment type="miscellaneous">
    <text evidence="3">The variability of the residues taking part of IgE-binding epitopes might be responsible of the difference in cross-reactivity among olive pollen cultivars, and between distantly related pollen species, leading to a variable range of allergy reactions among atopic patients.</text>
</comment>
<comment type="similarity">
    <text evidence="2">Belongs to the profilin family.</text>
</comment>
<sequence>MSWQAYVDDHLMCDIEGPEDHRLTAAAIVGHDGSVWAQSATFPQFKPEEMNGIMTDFNEPGHLAPTGLHLGGTKYMVIQGEAGAVVRGKKGSGGITIKKTGQALVFGIYEEPVTPGQCNMVVERLGDYLLEQGL</sequence>
<organism>
    <name type="scientific">Olea europaea</name>
    <name type="common">Common olive</name>
    <dbReference type="NCBI Taxonomy" id="4146"/>
    <lineage>
        <taxon>Eukaryota</taxon>
        <taxon>Viridiplantae</taxon>
        <taxon>Streptophyta</taxon>
        <taxon>Embryophyta</taxon>
        <taxon>Tracheophyta</taxon>
        <taxon>Spermatophyta</taxon>
        <taxon>Magnoliopsida</taxon>
        <taxon>eudicotyledons</taxon>
        <taxon>Gunneridae</taxon>
        <taxon>Pentapetalae</taxon>
        <taxon>asterids</taxon>
        <taxon>lamiids</taxon>
        <taxon>Lamiales</taxon>
        <taxon>Oleaceae</taxon>
        <taxon>Oleeae</taxon>
        <taxon>Olea</taxon>
    </lineage>
</organism>
<keyword id="KW-0009">Actin-binding</keyword>
<keyword id="KW-0020">Allergen</keyword>
<keyword id="KW-0963">Cytoplasm</keyword>
<keyword id="KW-0206">Cytoskeleton</keyword>
<keyword id="KW-1015">Disulfide bond</keyword>
<keyword id="KW-0597">Phosphoprotein</keyword>
<name>PROBO_OLEEU</name>
<reference key="1">
    <citation type="journal article" date="2012" name="PLoS ONE">
        <title>Characterization of profilin polymorphism in pollen with a focus on multifunctionality.</title>
        <authorList>
            <person name="Jimenez-Lopez J.C."/>
            <person name="Morales S."/>
            <person name="Castro A.J."/>
            <person name="Volkmann D."/>
            <person name="Rodriguez-Garcia M.I."/>
            <person name="Alche Jde D."/>
        </authorList>
    </citation>
    <scope>NUCLEOTIDE SEQUENCE [MRNA]</scope>
    <scope>POLYMORPHISM</scope>
    <source>
        <strain>cv. Bella de Espana</strain>
        <tissue>Pollen</tissue>
    </source>
</reference>
<reference key="2">
    <citation type="journal article" date="2013" name="PLoS ONE">
        <title>Analysis of the effects of polymorphism on pollen profilin structural functionality and the generation of conformational, T- and B-cell epitopes.</title>
        <authorList>
            <person name="Jimenez-Lopez J.C."/>
            <person name="Rodriguez-Garcia M.I."/>
            <person name="Alche J.D."/>
        </authorList>
    </citation>
    <scope>3D-STRUCTURE MODELING</scope>
    <scope>DISULFIDE BOND</scope>
</reference>
<evidence type="ECO:0000250" key="1"/>
<evidence type="ECO:0000305" key="2"/>
<evidence type="ECO:0000305" key="3">
    <source>
    </source>
</evidence>
<proteinExistence type="evidence at protein level"/>